<name>SYP_POLNS</name>
<protein>
    <recommendedName>
        <fullName evidence="1">Proline--tRNA ligase</fullName>
        <ecNumber evidence="1">6.1.1.15</ecNumber>
    </recommendedName>
    <alternativeName>
        <fullName evidence="1">Prolyl-tRNA synthetase</fullName>
        <shortName evidence="1">ProRS</shortName>
    </alternativeName>
</protein>
<proteinExistence type="inferred from homology"/>
<feature type="chain" id="PRO_1000199408" description="Proline--tRNA ligase">
    <location>
        <begin position="1"/>
        <end position="580"/>
    </location>
</feature>
<comment type="function">
    <text evidence="1">Catalyzes the attachment of proline to tRNA(Pro) in a two-step reaction: proline is first activated by ATP to form Pro-AMP and then transferred to the acceptor end of tRNA(Pro). As ProRS can inadvertently accommodate and process non-cognate amino acids such as alanine and cysteine, to avoid such errors it has two additional distinct editing activities against alanine. One activity is designated as 'pretransfer' editing and involves the tRNA(Pro)-independent hydrolysis of activated Ala-AMP. The other activity is designated 'posttransfer' editing and involves deacylation of mischarged Ala-tRNA(Pro). The misacylated Cys-tRNA(Pro) is not edited by ProRS.</text>
</comment>
<comment type="catalytic activity">
    <reaction evidence="1">
        <text>tRNA(Pro) + L-proline + ATP = L-prolyl-tRNA(Pro) + AMP + diphosphate</text>
        <dbReference type="Rhea" id="RHEA:14305"/>
        <dbReference type="Rhea" id="RHEA-COMP:9700"/>
        <dbReference type="Rhea" id="RHEA-COMP:9702"/>
        <dbReference type="ChEBI" id="CHEBI:30616"/>
        <dbReference type="ChEBI" id="CHEBI:33019"/>
        <dbReference type="ChEBI" id="CHEBI:60039"/>
        <dbReference type="ChEBI" id="CHEBI:78442"/>
        <dbReference type="ChEBI" id="CHEBI:78532"/>
        <dbReference type="ChEBI" id="CHEBI:456215"/>
        <dbReference type="EC" id="6.1.1.15"/>
    </reaction>
</comment>
<comment type="subunit">
    <text evidence="1">Homodimer.</text>
</comment>
<comment type="subcellular location">
    <subcellularLocation>
        <location evidence="1">Cytoplasm</location>
    </subcellularLocation>
</comment>
<comment type="domain">
    <text evidence="1">Consists of three domains: the N-terminal catalytic domain, the editing domain and the C-terminal anticodon-binding domain.</text>
</comment>
<comment type="similarity">
    <text evidence="1">Belongs to the class-II aminoacyl-tRNA synthetase family. ProS type 1 subfamily.</text>
</comment>
<dbReference type="EC" id="6.1.1.15" evidence="1"/>
<dbReference type="EMBL" id="CP001010">
    <property type="protein sequence ID" value="ACB43515.1"/>
    <property type="molecule type" value="Genomic_DNA"/>
</dbReference>
<dbReference type="SMR" id="B1XT38"/>
<dbReference type="STRING" id="452638.Pnec_0218"/>
<dbReference type="KEGG" id="pne:Pnec_0218"/>
<dbReference type="eggNOG" id="COG0442">
    <property type="taxonomic scope" value="Bacteria"/>
</dbReference>
<dbReference type="HOGENOM" id="CLU_016739_0_0_4"/>
<dbReference type="OrthoDB" id="9809052at2"/>
<dbReference type="GO" id="GO:0005829">
    <property type="term" value="C:cytosol"/>
    <property type="evidence" value="ECO:0007669"/>
    <property type="project" value="TreeGrafter"/>
</dbReference>
<dbReference type="GO" id="GO:0002161">
    <property type="term" value="F:aminoacyl-tRNA deacylase activity"/>
    <property type="evidence" value="ECO:0007669"/>
    <property type="project" value="InterPro"/>
</dbReference>
<dbReference type="GO" id="GO:0005524">
    <property type="term" value="F:ATP binding"/>
    <property type="evidence" value="ECO:0007669"/>
    <property type="project" value="UniProtKB-UniRule"/>
</dbReference>
<dbReference type="GO" id="GO:0004827">
    <property type="term" value="F:proline-tRNA ligase activity"/>
    <property type="evidence" value="ECO:0007669"/>
    <property type="project" value="UniProtKB-UniRule"/>
</dbReference>
<dbReference type="GO" id="GO:0006433">
    <property type="term" value="P:prolyl-tRNA aminoacylation"/>
    <property type="evidence" value="ECO:0007669"/>
    <property type="project" value="UniProtKB-UniRule"/>
</dbReference>
<dbReference type="CDD" id="cd04334">
    <property type="entry name" value="ProRS-INS"/>
    <property type="match status" value="1"/>
</dbReference>
<dbReference type="CDD" id="cd00861">
    <property type="entry name" value="ProRS_anticodon_short"/>
    <property type="match status" value="1"/>
</dbReference>
<dbReference type="CDD" id="cd00779">
    <property type="entry name" value="ProRS_core_prok"/>
    <property type="match status" value="1"/>
</dbReference>
<dbReference type="FunFam" id="3.30.930.10:FF:000012">
    <property type="entry name" value="Proline--tRNA ligase"/>
    <property type="match status" value="1"/>
</dbReference>
<dbReference type="Gene3D" id="3.40.50.800">
    <property type="entry name" value="Anticodon-binding domain"/>
    <property type="match status" value="1"/>
</dbReference>
<dbReference type="Gene3D" id="3.30.930.10">
    <property type="entry name" value="Bira Bifunctional Protein, Domain 2"/>
    <property type="match status" value="2"/>
</dbReference>
<dbReference type="Gene3D" id="3.90.960.10">
    <property type="entry name" value="YbaK/aminoacyl-tRNA synthetase-associated domain"/>
    <property type="match status" value="1"/>
</dbReference>
<dbReference type="HAMAP" id="MF_01569">
    <property type="entry name" value="Pro_tRNA_synth_type1"/>
    <property type="match status" value="1"/>
</dbReference>
<dbReference type="InterPro" id="IPR002314">
    <property type="entry name" value="aa-tRNA-synt_IIb"/>
</dbReference>
<dbReference type="InterPro" id="IPR006195">
    <property type="entry name" value="aa-tRNA-synth_II"/>
</dbReference>
<dbReference type="InterPro" id="IPR045864">
    <property type="entry name" value="aa-tRNA-synth_II/BPL/LPL"/>
</dbReference>
<dbReference type="InterPro" id="IPR004154">
    <property type="entry name" value="Anticodon-bd"/>
</dbReference>
<dbReference type="InterPro" id="IPR036621">
    <property type="entry name" value="Anticodon-bd_dom_sf"/>
</dbReference>
<dbReference type="InterPro" id="IPR002316">
    <property type="entry name" value="Pro-tRNA-ligase_IIa"/>
</dbReference>
<dbReference type="InterPro" id="IPR004500">
    <property type="entry name" value="Pro-tRNA-synth_IIa_bac-type"/>
</dbReference>
<dbReference type="InterPro" id="IPR023717">
    <property type="entry name" value="Pro-tRNA-Synthase_IIa_type1"/>
</dbReference>
<dbReference type="InterPro" id="IPR050062">
    <property type="entry name" value="Pro-tRNA_synthetase"/>
</dbReference>
<dbReference type="InterPro" id="IPR044140">
    <property type="entry name" value="ProRS_anticodon_short"/>
</dbReference>
<dbReference type="InterPro" id="IPR033730">
    <property type="entry name" value="ProRS_core_prok"/>
</dbReference>
<dbReference type="InterPro" id="IPR036754">
    <property type="entry name" value="YbaK/aa-tRNA-synt-asso_dom_sf"/>
</dbReference>
<dbReference type="InterPro" id="IPR007214">
    <property type="entry name" value="YbaK/aa-tRNA-synth-assoc-dom"/>
</dbReference>
<dbReference type="NCBIfam" id="NF006625">
    <property type="entry name" value="PRK09194.1"/>
    <property type="match status" value="1"/>
</dbReference>
<dbReference type="NCBIfam" id="TIGR00409">
    <property type="entry name" value="proS_fam_II"/>
    <property type="match status" value="1"/>
</dbReference>
<dbReference type="PANTHER" id="PTHR42753">
    <property type="entry name" value="MITOCHONDRIAL RIBOSOME PROTEIN L39/PROLYL-TRNA LIGASE FAMILY MEMBER"/>
    <property type="match status" value="1"/>
</dbReference>
<dbReference type="PANTHER" id="PTHR42753:SF2">
    <property type="entry name" value="PROLINE--TRNA LIGASE"/>
    <property type="match status" value="1"/>
</dbReference>
<dbReference type="Pfam" id="PF03129">
    <property type="entry name" value="HGTP_anticodon"/>
    <property type="match status" value="1"/>
</dbReference>
<dbReference type="Pfam" id="PF00587">
    <property type="entry name" value="tRNA-synt_2b"/>
    <property type="match status" value="1"/>
</dbReference>
<dbReference type="Pfam" id="PF04073">
    <property type="entry name" value="tRNA_edit"/>
    <property type="match status" value="1"/>
</dbReference>
<dbReference type="PIRSF" id="PIRSF001535">
    <property type="entry name" value="ProRS_1"/>
    <property type="match status" value="1"/>
</dbReference>
<dbReference type="PRINTS" id="PR01046">
    <property type="entry name" value="TRNASYNTHPRO"/>
</dbReference>
<dbReference type="SUPFAM" id="SSF52954">
    <property type="entry name" value="Class II aaRS ABD-related"/>
    <property type="match status" value="1"/>
</dbReference>
<dbReference type="SUPFAM" id="SSF55681">
    <property type="entry name" value="Class II aaRS and biotin synthetases"/>
    <property type="match status" value="1"/>
</dbReference>
<dbReference type="SUPFAM" id="SSF55826">
    <property type="entry name" value="YbaK/ProRS associated domain"/>
    <property type="match status" value="1"/>
</dbReference>
<dbReference type="PROSITE" id="PS50862">
    <property type="entry name" value="AA_TRNA_LIGASE_II"/>
    <property type="match status" value="1"/>
</dbReference>
<reference key="1">
    <citation type="journal article" date="2013" name="Proc. Natl. Acad. Sci. U.S.A.">
        <title>Polynucleobacter necessarius, a model for genome reduction in both free-living and symbiotic bacteria.</title>
        <authorList>
            <person name="Boscaro V."/>
            <person name="Felletti M."/>
            <person name="Vannini C."/>
            <person name="Ackerman M.S."/>
            <person name="Chain P.S."/>
            <person name="Malfatti S."/>
            <person name="Vergez L.M."/>
            <person name="Shin M."/>
            <person name="Doak T.G."/>
            <person name="Lynch M."/>
            <person name="Petroni G."/>
        </authorList>
    </citation>
    <scope>NUCLEOTIDE SEQUENCE [LARGE SCALE GENOMIC DNA]</scope>
    <source>
        <strain>STIR1</strain>
    </source>
</reference>
<gene>
    <name evidence="1" type="primary">proS</name>
    <name type="ordered locus">Pnec_0218</name>
</gene>
<keyword id="KW-0030">Aminoacyl-tRNA synthetase</keyword>
<keyword id="KW-0067">ATP-binding</keyword>
<keyword id="KW-0963">Cytoplasm</keyword>
<keyword id="KW-0436">Ligase</keyword>
<keyword id="KW-0547">Nucleotide-binding</keyword>
<keyword id="KW-0648">Protein biosynthesis</keyword>
<sequence>MKASQSFLATLKEAPSDAEVVSHKLMVRAGLIRKLSAGVYNYLPLGLKVIRKVENIIREEMNRAGAIELLMPMIQPAELWQETGRWEKMGPELLRIKDRHDRDFLIQPTSEEVVTDLARNEIKSYKQLPVNFYQIQTKFRDERRPRFGIMRGREFSMKDAYSFDRDTEGLKKSYQIMFDAYTRIFKRMGLQFRAVTADNGAIGGSGSQEFHVIADTGEDAIVYCPDSDYAANLEAAESLALIASRAAASVAMAKVPTPDKTNCADVAKFLNIPIESTVKSLLFVADQENGPAKLFMLLVRGDHELNEVKASKIPGMAESRFASEAEIKLACNAPAGYLGPVGVSADATVVADRTVANMADFVCGANDAGHHLTGVNWGRDLPEPLVLDIRNAVVGDPSPDGKGVVDICRGIEVGHVFQLGTRYSEAMGCTYLDQQGKAQPMVMGCYGIGVTRLLGAAIEQGHDEKGIIWPISMAPCEVVICPMGYEKSEAVKAACDQLHDGLLAAGVDVILDDRNERPGAMFADWGLIGAPFRVVIGDRGLVDSQVEFKGRTDAESQNIPLTQIKEKVIAAIQTTKQSIV</sequence>
<accession>B1XT38</accession>
<organism>
    <name type="scientific">Polynucleobacter necessarius subsp. necessarius (strain STIR1)</name>
    <dbReference type="NCBI Taxonomy" id="452638"/>
    <lineage>
        <taxon>Bacteria</taxon>
        <taxon>Pseudomonadati</taxon>
        <taxon>Pseudomonadota</taxon>
        <taxon>Betaproteobacteria</taxon>
        <taxon>Burkholderiales</taxon>
        <taxon>Burkholderiaceae</taxon>
        <taxon>Polynucleobacter</taxon>
    </lineage>
</organism>
<evidence type="ECO:0000255" key="1">
    <source>
        <dbReference type="HAMAP-Rule" id="MF_01569"/>
    </source>
</evidence>